<sequence length="92" mass="11263">MATTYEEFSAKLDRLDEEFNRKMQEQNAKFFADKPDESTLSPEMKEHYEKFERMIREHTEKFNKKMHEHSEHFKQKFAELLEQQKAAQYPSK</sequence>
<protein>
    <recommendedName>
        <fullName>Kinetoplastid membrane protein 11C</fullName>
    </recommendedName>
</protein>
<gene>
    <name type="primary">KMP-11C</name>
</gene>
<reference evidence="7" key="1">
    <citation type="journal article" date="1997" name="Exp. Parasitol.">
        <title>Cloning of genes, expression and antigenicity analysis of the Leishmania infantum KMP-11 protein.</title>
        <authorList>
            <person name="Berberich C."/>
            <person name="Requena J.M."/>
            <person name="Alonso C."/>
        </authorList>
    </citation>
    <scope>NUCLEOTIDE SEQUENCE [GENOMIC DNA]</scope>
    <source>
        <strain>LEM 78 / MON-1</strain>
    </source>
</reference>
<reference evidence="6" key="2">
    <citation type="journal article" date="1998" name="Biochim. Biophys. Acta">
        <title>The expression of the Leishmania infantum KMP-11 protein is developmentally regulated and stage specific.</title>
        <authorList>
            <person name="Berberich C."/>
            <person name="Machado G."/>
            <person name="Morales G."/>
            <person name="Carrillo G."/>
            <person name="Jimenez-Ruiz A."/>
            <person name="Alonso C."/>
        </authorList>
    </citation>
    <scope>SUBCELLULAR LOCATION</scope>
    <scope>TISSUE SPECIFICITY</scope>
    <scope>DEVELOPMENTAL STAGE</scope>
</reference>
<reference evidence="6" key="3">
    <citation type="journal article" date="1999" name="Eur. J. Biochem.">
        <title>Folding stability of the kinetoplastid membrane protein-11 (KMP-11) from Leishmania infantum.</title>
        <authorList>
            <person name="Fuertes M.A."/>
            <person name="Berberich C."/>
            <person name="Lozano R.M."/>
            <person name="Gimenez-Gallego G."/>
            <person name="Alonso C."/>
        </authorList>
    </citation>
    <scope>SUBUNIT</scope>
    <scope>SECONDARY STRUCTURE PREDICTION</scope>
</reference>
<reference evidence="6" key="4">
    <citation type="journal article" date="2001" name="J. Biol. Inorg. Chem.">
        <title>Calcium-induced conformational changes in Leishmania infantum kinetoplastid membrane protein-11.</title>
        <authorList>
            <person name="Fuertes M.A."/>
            <person name="Perez J.M."/>
            <person name="Soto M."/>
            <person name="Lopez M.C."/>
            <person name="Alonso C."/>
        </authorList>
    </citation>
    <scope>CALCIUM-BINDING DATA</scope>
</reference>
<dbReference type="EMBL" id="X95627">
    <property type="protein sequence ID" value="CAA64883.1"/>
    <property type="molecule type" value="Genomic_DNA"/>
</dbReference>
<dbReference type="SMR" id="Q25298"/>
<dbReference type="VEuPathDB" id="TriTrypDB:LINF_350027500"/>
<dbReference type="eggNOG" id="ENOG502S6FH">
    <property type="taxonomic scope" value="Eukaryota"/>
</dbReference>
<dbReference type="GO" id="GO:0005737">
    <property type="term" value="C:cytoplasm"/>
    <property type="evidence" value="ECO:0007669"/>
    <property type="project" value="UniProtKB-KW"/>
</dbReference>
<dbReference type="GO" id="GO:0005874">
    <property type="term" value="C:microtubule"/>
    <property type="evidence" value="ECO:0007669"/>
    <property type="project" value="UniProtKB-KW"/>
</dbReference>
<dbReference type="GO" id="GO:0015630">
    <property type="term" value="C:microtubule cytoskeleton"/>
    <property type="evidence" value="ECO:0000250"/>
    <property type="project" value="UniProtKB"/>
</dbReference>
<dbReference type="GO" id="GO:0031514">
    <property type="term" value="C:motile cilium"/>
    <property type="evidence" value="ECO:0007669"/>
    <property type="project" value="UniProtKB-SubCell"/>
</dbReference>
<dbReference type="GO" id="GO:0007010">
    <property type="term" value="P:cytoskeleton organization"/>
    <property type="evidence" value="ECO:0000250"/>
    <property type="project" value="UniProtKB"/>
</dbReference>
<dbReference type="GO" id="GO:0006952">
    <property type="term" value="P:defense response"/>
    <property type="evidence" value="ECO:0007669"/>
    <property type="project" value="InterPro"/>
</dbReference>
<dbReference type="GO" id="GO:0008284">
    <property type="term" value="P:positive regulation of cell population proliferation"/>
    <property type="evidence" value="ECO:0007669"/>
    <property type="project" value="InterPro"/>
</dbReference>
<dbReference type="Gene3D" id="1.20.120.20">
    <property type="entry name" value="Apolipoprotein"/>
    <property type="match status" value="1"/>
</dbReference>
<dbReference type="InterPro" id="IPR004132">
    <property type="entry name" value="KMP11"/>
</dbReference>
<dbReference type="Pfam" id="PF03037">
    <property type="entry name" value="KMP11"/>
    <property type="match status" value="1"/>
</dbReference>
<feature type="chain" id="PRO_0000205713" description="Kinetoplastid membrane protein 11C">
    <location>
        <begin position="1"/>
        <end position="92"/>
    </location>
</feature>
<evidence type="ECO:0000250" key="1">
    <source>
        <dbReference type="UniProtKB" id="Q9U6Z1"/>
    </source>
</evidence>
<evidence type="ECO:0000269" key="2">
    <source>
    </source>
</evidence>
<evidence type="ECO:0000269" key="3">
    <source>
    </source>
</evidence>
<evidence type="ECO:0000269" key="4">
    <source>
    </source>
</evidence>
<evidence type="ECO:0000269" key="5">
    <source>
    </source>
</evidence>
<evidence type="ECO:0000305" key="6"/>
<evidence type="ECO:0000312" key="7">
    <source>
        <dbReference type="EMBL" id="CAA64883.1"/>
    </source>
</evidence>
<accession>Q25298</accession>
<name>KM11C_LEIIN</name>
<organism evidence="7">
    <name type="scientific">Leishmania infantum</name>
    <dbReference type="NCBI Taxonomy" id="5671"/>
    <lineage>
        <taxon>Eukaryota</taxon>
        <taxon>Discoba</taxon>
        <taxon>Euglenozoa</taxon>
        <taxon>Kinetoplastea</taxon>
        <taxon>Metakinetoplastina</taxon>
        <taxon>Trypanosomatida</taxon>
        <taxon>Trypanosomatidae</taxon>
        <taxon>Leishmaniinae</taxon>
        <taxon>Leishmania</taxon>
    </lineage>
</organism>
<comment type="function">
    <text evidence="1 4">May be involved in the regulation of the cytoskeleton through interaction with the subpellicular microtubules. May be involved in parasite mobility and attachment to the surface of the host cell. Behaves as a strong immunogen during infection.</text>
</comment>
<comment type="subunit">
    <text evidence="2">Monomer.</text>
</comment>
<comment type="subcellular location">
    <subcellularLocation>
        <location evidence="5">Cytoplasm</location>
        <location evidence="5">Cytoskeleton</location>
    </subcellularLocation>
    <subcellularLocation>
        <location evidence="5">Cell projection</location>
        <location evidence="5">Cilium</location>
        <location evidence="5">Flagellum</location>
    </subcellularLocation>
    <text>Associated with microtubules. Associated with the flagellum and flagellar pocket.</text>
</comment>
<comment type="developmental stage">
    <text evidence="5">Expressed abundantly in logarithmic phase promastigotes, and to a lesser extent in stationary phase promastigotes and amastigotes.</text>
</comment>
<comment type="miscellaneous">
    <text evidence="3">Binds calcium.</text>
</comment>
<comment type="similarity">
    <text evidence="6">Belongs to the KMP-11 family.</text>
</comment>
<keyword id="KW-0106">Calcium</keyword>
<keyword id="KW-0966">Cell projection</keyword>
<keyword id="KW-0969">Cilium</keyword>
<keyword id="KW-0963">Cytoplasm</keyword>
<keyword id="KW-0206">Cytoskeleton</keyword>
<keyword id="KW-0282">Flagellum</keyword>
<keyword id="KW-0493">Microtubule</keyword>
<proteinExistence type="evidence at protein level"/>